<reference key="1">
    <citation type="journal article" date="2009" name="J. Bacteriol.">
        <title>Complete genome sequence and comparative genome analysis of enteropathogenic Escherichia coli O127:H6 strain E2348/69.</title>
        <authorList>
            <person name="Iguchi A."/>
            <person name="Thomson N.R."/>
            <person name="Ogura Y."/>
            <person name="Saunders D."/>
            <person name="Ooka T."/>
            <person name="Henderson I.R."/>
            <person name="Harris D."/>
            <person name="Asadulghani M."/>
            <person name="Kurokawa K."/>
            <person name="Dean P."/>
            <person name="Kenny B."/>
            <person name="Quail M.A."/>
            <person name="Thurston S."/>
            <person name="Dougan G."/>
            <person name="Hayashi T."/>
            <person name="Parkhill J."/>
            <person name="Frankel G."/>
        </authorList>
    </citation>
    <scope>NUCLEOTIDE SEQUENCE [LARGE SCALE GENOMIC DNA]</scope>
    <source>
        <strain>E2348/69 / EPEC</strain>
    </source>
</reference>
<comment type="function">
    <text evidence="1">Di-iron-containing protein involved in the repair of iron-sulfur clusters damaged by oxidative and nitrosative stress conditions.</text>
</comment>
<comment type="subunit">
    <text evidence="1">Homodimer.</text>
</comment>
<comment type="subcellular location">
    <subcellularLocation>
        <location evidence="1">Cytoplasm</location>
    </subcellularLocation>
</comment>
<comment type="similarity">
    <text evidence="1">Belongs to the RIC family. YtfE subfamily.</text>
</comment>
<proteinExistence type="inferred from homology"/>
<protein>
    <recommendedName>
        <fullName evidence="1">Iron-sulfur cluster repair protein YtfE</fullName>
    </recommendedName>
</protein>
<name>YTFE_ECO27</name>
<accession>B7UQM4</accession>
<organism>
    <name type="scientific">Escherichia coli O127:H6 (strain E2348/69 / EPEC)</name>
    <dbReference type="NCBI Taxonomy" id="574521"/>
    <lineage>
        <taxon>Bacteria</taxon>
        <taxon>Pseudomonadati</taxon>
        <taxon>Pseudomonadota</taxon>
        <taxon>Gammaproteobacteria</taxon>
        <taxon>Enterobacterales</taxon>
        <taxon>Enterobacteriaceae</taxon>
        <taxon>Escherichia</taxon>
    </lineage>
</organism>
<dbReference type="EMBL" id="FM180568">
    <property type="protein sequence ID" value="CAS12088.1"/>
    <property type="molecule type" value="Genomic_DNA"/>
</dbReference>
<dbReference type="RefSeq" id="WP_000331451.1">
    <property type="nucleotide sequence ID" value="NC_011601.1"/>
</dbReference>
<dbReference type="SMR" id="B7UQM4"/>
<dbReference type="GeneID" id="89519204"/>
<dbReference type="KEGG" id="ecg:E2348C_4540"/>
<dbReference type="HOGENOM" id="CLU_076075_2_0_6"/>
<dbReference type="Proteomes" id="UP000008205">
    <property type="component" value="Chromosome"/>
</dbReference>
<dbReference type="GO" id="GO:0005737">
    <property type="term" value="C:cytoplasm"/>
    <property type="evidence" value="ECO:0007669"/>
    <property type="project" value="UniProtKB-SubCell"/>
</dbReference>
<dbReference type="GO" id="GO:0046872">
    <property type="term" value="F:metal ion binding"/>
    <property type="evidence" value="ECO:0007669"/>
    <property type="project" value="UniProtKB-KW"/>
</dbReference>
<dbReference type="GO" id="GO:0030091">
    <property type="term" value="P:protein repair"/>
    <property type="evidence" value="ECO:0007669"/>
    <property type="project" value="UniProtKB-UniRule"/>
</dbReference>
<dbReference type="GO" id="GO:0051409">
    <property type="term" value="P:response to nitrosative stress"/>
    <property type="evidence" value="ECO:0007669"/>
    <property type="project" value="UniProtKB-UniRule"/>
</dbReference>
<dbReference type="GO" id="GO:0006979">
    <property type="term" value="P:response to oxidative stress"/>
    <property type="evidence" value="ECO:0007669"/>
    <property type="project" value="UniProtKB-UniRule"/>
</dbReference>
<dbReference type="CDD" id="cd12108">
    <property type="entry name" value="Hr-like"/>
    <property type="match status" value="1"/>
</dbReference>
<dbReference type="FunFam" id="1.20.120.520:FF:000001">
    <property type="entry name" value="Iron-sulfur cluster repair protein YtfE"/>
    <property type="match status" value="1"/>
</dbReference>
<dbReference type="Gene3D" id="1.20.120.520">
    <property type="entry name" value="nmb1532 protein domain like"/>
    <property type="match status" value="1"/>
</dbReference>
<dbReference type="HAMAP" id="MF_01606">
    <property type="entry name" value="RIC_YtfE"/>
    <property type="match status" value="1"/>
</dbReference>
<dbReference type="InterPro" id="IPR023742">
    <property type="entry name" value="FeS-repair_YftE"/>
</dbReference>
<dbReference type="InterPro" id="IPR012312">
    <property type="entry name" value="Hemerythrin-like"/>
</dbReference>
<dbReference type="InterPro" id="IPR019903">
    <property type="entry name" value="RIC_family"/>
</dbReference>
<dbReference type="NCBIfam" id="TIGR03652">
    <property type="entry name" value="FeS_repair_RIC"/>
    <property type="match status" value="1"/>
</dbReference>
<dbReference type="NCBIfam" id="NF008221">
    <property type="entry name" value="PRK10992.1"/>
    <property type="match status" value="1"/>
</dbReference>
<dbReference type="PANTHER" id="PTHR36438">
    <property type="entry name" value="IRON-SULFUR CLUSTER REPAIR PROTEIN YTFE"/>
    <property type="match status" value="1"/>
</dbReference>
<dbReference type="PANTHER" id="PTHR36438:SF1">
    <property type="entry name" value="IRON-SULFUR CLUSTER REPAIR PROTEIN YTFE"/>
    <property type="match status" value="1"/>
</dbReference>
<dbReference type="Pfam" id="PF01814">
    <property type="entry name" value="Hemerythrin"/>
    <property type="match status" value="1"/>
</dbReference>
<dbReference type="Pfam" id="PF04405">
    <property type="entry name" value="ScdA_N"/>
    <property type="match status" value="1"/>
</dbReference>
<evidence type="ECO:0000255" key="1">
    <source>
        <dbReference type="HAMAP-Rule" id="MF_01606"/>
    </source>
</evidence>
<feature type="chain" id="PRO_1000185839" description="Iron-sulfur cluster repair protein YtfE">
    <location>
        <begin position="1"/>
        <end position="220"/>
    </location>
</feature>
<gene>
    <name evidence="1" type="primary">ytfE</name>
    <name type="ordered locus">E2348C_4540</name>
</gene>
<keyword id="KW-0963">Cytoplasm</keyword>
<keyword id="KW-0408">Iron</keyword>
<keyword id="KW-0479">Metal-binding</keyword>
<keyword id="KW-1185">Reference proteome</keyword>
<keyword id="KW-0346">Stress response</keyword>
<sequence length="220" mass="24883">MAYRDQPLGELALSIPRASALFRKYDMDYCCGGKQTLARAAARKELDVDVIEAELAKLAEQPIEKDWRSAPLAEIIDHIIVRYHDRHREQLPELILQATKVERVHADKPSVPKGLTKYLTMLHEELSSHMMKEEQILFPMIKQGMGSQAMGPISVMESEHDEAGELLEVIKHTTNNVTPPPEACTTWKAMYNGINELIDDLMEHISLENNVLFPRALAGE</sequence>